<keyword id="KW-0408">Iron</keyword>
<keyword id="KW-0411">Iron-sulfur</keyword>
<keyword id="KW-0479">Metal-binding</keyword>
<name>ERPA_YERP3</name>
<proteinExistence type="inferred from homology"/>
<sequence>MSNETVLPLQFTEAAAKKVKLLISDEENPNLKLRVYITGGGCSGFQYGFTFDDQVNDGDMTIEKQGVELVVDPMSLQYLVGGAVDYTEGLEGSRFIVTNPNAKSTCGCGSSFSI</sequence>
<feature type="chain" id="PRO_1000144945" description="Iron-sulfur cluster insertion protein ErpA">
    <location>
        <begin position="1"/>
        <end position="114"/>
    </location>
</feature>
<feature type="binding site" evidence="1">
    <location>
        <position position="42"/>
    </location>
    <ligand>
        <name>iron-sulfur cluster</name>
        <dbReference type="ChEBI" id="CHEBI:30408"/>
    </ligand>
</feature>
<feature type="binding site" evidence="1">
    <location>
        <position position="106"/>
    </location>
    <ligand>
        <name>iron-sulfur cluster</name>
        <dbReference type="ChEBI" id="CHEBI:30408"/>
    </ligand>
</feature>
<feature type="binding site" evidence="1">
    <location>
        <position position="108"/>
    </location>
    <ligand>
        <name>iron-sulfur cluster</name>
        <dbReference type="ChEBI" id="CHEBI:30408"/>
    </ligand>
</feature>
<protein>
    <recommendedName>
        <fullName evidence="1">Iron-sulfur cluster insertion protein ErpA</fullName>
    </recommendedName>
</protein>
<accession>A7FM07</accession>
<organism>
    <name type="scientific">Yersinia pseudotuberculosis serotype O:1b (strain IP 31758)</name>
    <dbReference type="NCBI Taxonomy" id="349747"/>
    <lineage>
        <taxon>Bacteria</taxon>
        <taxon>Pseudomonadati</taxon>
        <taxon>Pseudomonadota</taxon>
        <taxon>Gammaproteobacteria</taxon>
        <taxon>Enterobacterales</taxon>
        <taxon>Yersiniaceae</taxon>
        <taxon>Yersinia</taxon>
    </lineage>
</organism>
<comment type="function">
    <text evidence="1">Required for insertion of 4Fe-4S clusters for at least IspG.</text>
</comment>
<comment type="cofactor">
    <cofactor evidence="1">
        <name>iron-sulfur cluster</name>
        <dbReference type="ChEBI" id="CHEBI:30408"/>
    </cofactor>
    <text evidence="1">Binds 1 iron-sulfur cluster per subunit.</text>
</comment>
<comment type="subunit">
    <text evidence="1">Homodimer.</text>
</comment>
<comment type="similarity">
    <text evidence="1">Belongs to the HesB/IscA family.</text>
</comment>
<gene>
    <name evidence="1" type="primary">erpA</name>
    <name type="ordered locus">YpsIP31758_3328</name>
</gene>
<dbReference type="EMBL" id="CP000720">
    <property type="protein sequence ID" value="ABS46845.1"/>
    <property type="molecule type" value="Genomic_DNA"/>
</dbReference>
<dbReference type="RefSeq" id="WP_002209365.1">
    <property type="nucleotide sequence ID" value="NC_009708.1"/>
</dbReference>
<dbReference type="SMR" id="A7FM07"/>
<dbReference type="GeneID" id="96664241"/>
<dbReference type="KEGG" id="ypi:YpsIP31758_3328"/>
<dbReference type="HOGENOM" id="CLU_069054_5_3_6"/>
<dbReference type="Proteomes" id="UP000002412">
    <property type="component" value="Chromosome"/>
</dbReference>
<dbReference type="GO" id="GO:0005829">
    <property type="term" value="C:cytosol"/>
    <property type="evidence" value="ECO:0007669"/>
    <property type="project" value="TreeGrafter"/>
</dbReference>
<dbReference type="GO" id="GO:0051537">
    <property type="term" value="F:2 iron, 2 sulfur cluster binding"/>
    <property type="evidence" value="ECO:0007669"/>
    <property type="project" value="UniProtKB-ARBA"/>
</dbReference>
<dbReference type="GO" id="GO:0051539">
    <property type="term" value="F:4 iron, 4 sulfur cluster binding"/>
    <property type="evidence" value="ECO:0007669"/>
    <property type="project" value="TreeGrafter"/>
</dbReference>
<dbReference type="GO" id="GO:0005506">
    <property type="term" value="F:iron ion binding"/>
    <property type="evidence" value="ECO:0007669"/>
    <property type="project" value="UniProtKB-UniRule"/>
</dbReference>
<dbReference type="GO" id="GO:0016226">
    <property type="term" value="P:iron-sulfur cluster assembly"/>
    <property type="evidence" value="ECO:0007669"/>
    <property type="project" value="UniProtKB-UniRule"/>
</dbReference>
<dbReference type="FunFam" id="2.60.300.12:FF:000002">
    <property type="entry name" value="Iron-sulfur cluster insertion protein ErpA"/>
    <property type="match status" value="1"/>
</dbReference>
<dbReference type="Gene3D" id="2.60.300.12">
    <property type="entry name" value="HesB-like domain"/>
    <property type="match status" value="1"/>
</dbReference>
<dbReference type="HAMAP" id="MF_01380">
    <property type="entry name" value="Fe_S_insert_ErpA"/>
    <property type="match status" value="1"/>
</dbReference>
<dbReference type="InterPro" id="IPR000361">
    <property type="entry name" value="FeS_biogenesis"/>
</dbReference>
<dbReference type="InterPro" id="IPR016092">
    <property type="entry name" value="FeS_cluster_insertion"/>
</dbReference>
<dbReference type="InterPro" id="IPR017870">
    <property type="entry name" value="FeS_cluster_insertion_CS"/>
</dbReference>
<dbReference type="InterPro" id="IPR023063">
    <property type="entry name" value="FeS_cluster_insertion_RrpA"/>
</dbReference>
<dbReference type="InterPro" id="IPR035903">
    <property type="entry name" value="HesB-like_dom_sf"/>
</dbReference>
<dbReference type="NCBIfam" id="TIGR00049">
    <property type="entry name" value="iron-sulfur cluster assembly accessory protein"/>
    <property type="match status" value="1"/>
</dbReference>
<dbReference type="NCBIfam" id="NF010147">
    <property type="entry name" value="PRK13623.1"/>
    <property type="match status" value="1"/>
</dbReference>
<dbReference type="PANTHER" id="PTHR43011">
    <property type="entry name" value="IRON-SULFUR CLUSTER ASSEMBLY 2 HOMOLOG, MITOCHONDRIAL"/>
    <property type="match status" value="1"/>
</dbReference>
<dbReference type="PANTHER" id="PTHR43011:SF1">
    <property type="entry name" value="IRON-SULFUR CLUSTER ASSEMBLY 2 HOMOLOG, MITOCHONDRIAL"/>
    <property type="match status" value="1"/>
</dbReference>
<dbReference type="Pfam" id="PF01521">
    <property type="entry name" value="Fe-S_biosyn"/>
    <property type="match status" value="1"/>
</dbReference>
<dbReference type="SUPFAM" id="SSF89360">
    <property type="entry name" value="HesB-like domain"/>
    <property type="match status" value="1"/>
</dbReference>
<dbReference type="PROSITE" id="PS01152">
    <property type="entry name" value="HESB"/>
    <property type="match status" value="1"/>
</dbReference>
<evidence type="ECO:0000255" key="1">
    <source>
        <dbReference type="HAMAP-Rule" id="MF_01380"/>
    </source>
</evidence>
<reference key="1">
    <citation type="journal article" date="2007" name="PLoS Genet.">
        <title>The complete genome sequence of Yersinia pseudotuberculosis IP31758, the causative agent of Far East scarlet-like fever.</title>
        <authorList>
            <person name="Eppinger M."/>
            <person name="Rosovitz M.J."/>
            <person name="Fricke W.F."/>
            <person name="Rasko D.A."/>
            <person name="Kokorina G."/>
            <person name="Fayolle C."/>
            <person name="Lindler L.E."/>
            <person name="Carniel E."/>
            <person name="Ravel J."/>
        </authorList>
    </citation>
    <scope>NUCLEOTIDE SEQUENCE [LARGE SCALE GENOMIC DNA]</scope>
    <source>
        <strain>IP 31758</strain>
    </source>
</reference>